<name>LFTR_PSEAB</name>
<accession>Q02NA9</accession>
<organism>
    <name type="scientific">Pseudomonas aeruginosa (strain UCBPP-PA14)</name>
    <dbReference type="NCBI Taxonomy" id="208963"/>
    <lineage>
        <taxon>Bacteria</taxon>
        <taxon>Pseudomonadati</taxon>
        <taxon>Pseudomonadota</taxon>
        <taxon>Gammaproteobacteria</taxon>
        <taxon>Pseudomonadales</taxon>
        <taxon>Pseudomonadaceae</taxon>
        <taxon>Pseudomonas</taxon>
    </lineage>
</organism>
<sequence>MLTWLSRTDFDFPPLDKALQEPNGLLAAGGDLNPQRLVAAYRHGCFPWYQDGQPILWWSPDPRTVLFPDELHVSRSLAKCLRQQRFEVTFNHDFRAVIQACAAPRDYADGTWITTPMQLAYQELHLRGIAHSVEVWQERQLVGGLYGLAMGRLFFGESMFSRADNASKVGFVTLVRHLRDAGFVLIDCQMPTRHLHSLGARAISRGEFADYLQRYRDQPPTGDLDF</sequence>
<gene>
    <name evidence="1" type="primary">aat</name>
    <name type="ordered locus">PA14_30270</name>
</gene>
<comment type="function">
    <text evidence="1">Functions in the N-end rule pathway of protein degradation where it conjugates Leu, Phe and, less efficiently, Met from aminoacyl-tRNAs to the N-termini of proteins containing an N-terminal arginine or lysine.</text>
</comment>
<comment type="catalytic activity">
    <reaction evidence="1">
        <text>N-terminal L-lysyl-[protein] + L-leucyl-tRNA(Leu) = N-terminal L-leucyl-L-lysyl-[protein] + tRNA(Leu) + H(+)</text>
        <dbReference type="Rhea" id="RHEA:12340"/>
        <dbReference type="Rhea" id="RHEA-COMP:9613"/>
        <dbReference type="Rhea" id="RHEA-COMP:9622"/>
        <dbReference type="Rhea" id="RHEA-COMP:12670"/>
        <dbReference type="Rhea" id="RHEA-COMP:12671"/>
        <dbReference type="ChEBI" id="CHEBI:15378"/>
        <dbReference type="ChEBI" id="CHEBI:65249"/>
        <dbReference type="ChEBI" id="CHEBI:78442"/>
        <dbReference type="ChEBI" id="CHEBI:78494"/>
        <dbReference type="ChEBI" id="CHEBI:133043"/>
        <dbReference type="EC" id="2.3.2.6"/>
    </reaction>
</comment>
<comment type="catalytic activity">
    <reaction evidence="1">
        <text>N-terminal L-arginyl-[protein] + L-leucyl-tRNA(Leu) = N-terminal L-leucyl-L-arginyl-[protein] + tRNA(Leu) + H(+)</text>
        <dbReference type="Rhea" id="RHEA:50416"/>
        <dbReference type="Rhea" id="RHEA-COMP:9613"/>
        <dbReference type="Rhea" id="RHEA-COMP:9622"/>
        <dbReference type="Rhea" id="RHEA-COMP:12672"/>
        <dbReference type="Rhea" id="RHEA-COMP:12673"/>
        <dbReference type="ChEBI" id="CHEBI:15378"/>
        <dbReference type="ChEBI" id="CHEBI:64719"/>
        <dbReference type="ChEBI" id="CHEBI:78442"/>
        <dbReference type="ChEBI" id="CHEBI:78494"/>
        <dbReference type="ChEBI" id="CHEBI:133044"/>
        <dbReference type="EC" id="2.3.2.6"/>
    </reaction>
</comment>
<comment type="catalytic activity">
    <reaction evidence="1">
        <text>L-phenylalanyl-tRNA(Phe) + an N-terminal L-alpha-aminoacyl-[protein] = an N-terminal L-phenylalanyl-L-alpha-aminoacyl-[protein] + tRNA(Phe)</text>
        <dbReference type="Rhea" id="RHEA:43632"/>
        <dbReference type="Rhea" id="RHEA-COMP:9668"/>
        <dbReference type="Rhea" id="RHEA-COMP:9699"/>
        <dbReference type="Rhea" id="RHEA-COMP:10636"/>
        <dbReference type="Rhea" id="RHEA-COMP:10637"/>
        <dbReference type="ChEBI" id="CHEBI:78442"/>
        <dbReference type="ChEBI" id="CHEBI:78531"/>
        <dbReference type="ChEBI" id="CHEBI:78597"/>
        <dbReference type="ChEBI" id="CHEBI:83561"/>
        <dbReference type="EC" id="2.3.2.6"/>
    </reaction>
</comment>
<comment type="subcellular location">
    <subcellularLocation>
        <location evidence="1">Cytoplasm</location>
    </subcellularLocation>
</comment>
<comment type="similarity">
    <text evidence="1">Belongs to the L/F-transferase family.</text>
</comment>
<evidence type="ECO:0000255" key="1">
    <source>
        <dbReference type="HAMAP-Rule" id="MF_00688"/>
    </source>
</evidence>
<reference key="1">
    <citation type="journal article" date="2006" name="Genome Biol.">
        <title>Genomic analysis reveals that Pseudomonas aeruginosa virulence is combinatorial.</title>
        <authorList>
            <person name="Lee D.G."/>
            <person name="Urbach J.M."/>
            <person name="Wu G."/>
            <person name="Liberati N.T."/>
            <person name="Feinbaum R.L."/>
            <person name="Miyata S."/>
            <person name="Diggins L.T."/>
            <person name="He J."/>
            <person name="Saucier M."/>
            <person name="Deziel E."/>
            <person name="Friedman L."/>
            <person name="Li L."/>
            <person name="Grills G."/>
            <person name="Montgomery K."/>
            <person name="Kucherlapati R."/>
            <person name="Rahme L.G."/>
            <person name="Ausubel F.M."/>
        </authorList>
    </citation>
    <scope>NUCLEOTIDE SEQUENCE [LARGE SCALE GENOMIC DNA]</scope>
    <source>
        <strain>UCBPP-PA14</strain>
    </source>
</reference>
<protein>
    <recommendedName>
        <fullName evidence="1">Leucyl/phenylalanyl-tRNA--protein transferase</fullName>
        <ecNumber evidence="1">2.3.2.6</ecNumber>
    </recommendedName>
    <alternativeName>
        <fullName evidence="1">L/F-transferase</fullName>
    </alternativeName>
    <alternativeName>
        <fullName evidence="1">Leucyltransferase</fullName>
    </alternativeName>
    <alternativeName>
        <fullName evidence="1">Phenyalanyltransferase</fullName>
    </alternativeName>
</protein>
<feature type="chain" id="PRO_0000304347" description="Leucyl/phenylalanyl-tRNA--protein transferase">
    <location>
        <begin position="1"/>
        <end position="226"/>
    </location>
</feature>
<keyword id="KW-0012">Acyltransferase</keyword>
<keyword id="KW-0963">Cytoplasm</keyword>
<keyword id="KW-0808">Transferase</keyword>
<proteinExistence type="inferred from homology"/>
<dbReference type="EC" id="2.3.2.6" evidence="1"/>
<dbReference type="EMBL" id="CP000438">
    <property type="protein sequence ID" value="ABJ11840.1"/>
    <property type="molecule type" value="Genomic_DNA"/>
</dbReference>
<dbReference type="RefSeq" id="WP_003131120.1">
    <property type="nucleotide sequence ID" value="NZ_CP034244.1"/>
</dbReference>
<dbReference type="SMR" id="Q02NA9"/>
<dbReference type="KEGG" id="pau:PA14_30270"/>
<dbReference type="PseudoCAP" id="PA14_30270"/>
<dbReference type="HOGENOM" id="CLU_075045_0_0_6"/>
<dbReference type="BioCyc" id="PAER208963:G1G74-2534-MONOMER"/>
<dbReference type="Proteomes" id="UP000000653">
    <property type="component" value="Chromosome"/>
</dbReference>
<dbReference type="GO" id="GO:0005737">
    <property type="term" value="C:cytoplasm"/>
    <property type="evidence" value="ECO:0007669"/>
    <property type="project" value="UniProtKB-SubCell"/>
</dbReference>
<dbReference type="GO" id="GO:0008914">
    <property type="term" value="F:leucyl-tRNA--protein transferase activity"/>
    <property type="evidence" value="ECO:0007669"/>
    <property type="project" value="UniProtKB-UniRule"/>
</dbReference>
<dbReference type="GO" id="GO:0030163">
    <property type="term" value="P:protein catabolic process"/>
    <property type="evidence" value="ECO:0007669"/>
    <property type="project" value="UniProtKB-UniRule"/>
</dbReference>
<dbReference type="FunFam" id="3.30.70.3550:FF:000001">
    <property type="entry name" value="Leucyl/phenylalanyl-tRNA--protein transferase"/>
    <property type="match status" value="1"/>
</dbReference>
<dbReference type="FunFam" id="3.40.630.70:FF:000003">
    <property type="entry name" value="Leucyl/phenylalanyl-tRNA--protein transferase"/>
    <property type="match status" value="1"/>
</dbReference>
<dbReference type="Gene3D" id="3.40.630.70">
    <property type="entry name" value="Leucyl/phenylalanyl-tRNA-protein transferase, C-terminal domain"/>
    <property type="match status" value="1"/>
</dbReference>
<dbReference type="Gene3D" id="3.30.70.3550">
    <property type="entry name" value="Leucyl/phenylalanyl-tRNA-protein transferase, N-terminal domain"/>
    <property type="match status" value="1"/>
</dbReference>
<dbReference type="HAMAP" id="MF_00688">
    <property type="entry name" value="Leu_Phe_trans"/>
    <property type="match status" value="1"/>
</dbReference>
<dbReference type="InterPro" id="IPR016181">
    <property type="entry name" value="Acyl_CoA_acyltransferase"/>
</dbReference>
<dbReference type="InterPro" id="IPR004616">
    <property type="entry name" value="Leu/Phe-tRNA_Trfase"/>
</dbReference>
<dbReference type="InterPro" id="IPR042203">
    <property type="entry name" value="Leu/Phe-tRNA_Trfase_C"/>
</dbReference>
<dbReference type="InterPro" id="IPR042221">
    <property type="entry name" value="Leu/Phe-tRNA_Trfase_N"/>
</dbReference>
<dbReference type="NCBIfam" id="TIGR00667">
    <property type="entry name" value="aat"/>
    <property type="match status" value="1"/>
</dbReference>
<dbReference type="PANTHER" id="PTHR30098">
    <property type="entry name" value="LEUCYL/PHENYLALANYL-TRNA--PROTEIN TRANSFERASE"/>
    <property type="match status" value="1"/>
</dbReference>
<dbReference type="PANTHER" id="PTHR30098:SF2">
    <property type="entry name" value="LEUCYL_PHENYLALANYL-TRNA--PROTEIN TRANSFERASE"/>
    <property type="match status" value="1"/>
</dbReference>
<dbReference type="Pfam" id="PF03588">
    <property type="entry name" value="Leu_Phe_trans"/>
    <property type="match status" value="1"/>
</dbReference>
<dbReference type="SUPFAM" id="SSF55729">
    <property type="entry name" value="Acyl-CoA N-acyltransferases (Nat)"/>
    <property type="match status" value="1"/>
</dbReference>